<name>PLD3B_BOVIN</name>
<keyword id="KW-0597">Phosphoprotein</keyword>
<keyword id="KW-1185">Reference proteome</keyword>
<accession>Q58DB0</accession>
<evidence type="ECO:0000250" key="1">
    <source>
        <dbReference type="UniProtKB" id="Q6P9U4"/>
    </source>
</evidence>
<evidence type="ECO:0000255" key="2">
    <source>
        <dbReference type="PROSITE-ProRule" id="PRU00158"/>
    </source>
</evidence>
<evidence type="ECO:0000305" key="3"/>
<dbReference type="EMBL" id="BT021687">
    <property type="protein sequence ID" value="AAX46534.1"/>
    <property type="molecule type" value="mRNA"/>
</dbReference>
<dbReference type="EMBL" id="BC102477">
    <property type="protein sequence ID" value="AAI02478.1"/>
    <property type="molecule type" value="mRNA"/>
</dbReference>
<dbReference type="RefSeq" id="NP_001030553.1">
    <property type="nucleotide sequence ID" value="NM_001035476.1"/>
</dbReference>
<dbReference type="SMR" id="Q58DB0"/>
<dbReference type="FunCoup" id="Q58DB0">
    <property type="interactions" value="2379"/>
</dbReference>
<dbReference type="STRING" id="9913.ENSBTAP00000005773"/>
<dbReference type="PaxDb" id="9913-ENSBTAP00000005773"/>
<dbReference type="GeneID" id="616523"/>
<dbReference type="KEGG" id="bta:616523"/>
<dbReference type="CTD" id="51012"/>
<dbReference type="VEuPathDB" id="HostDB:ENSBTAG00000004402"/>
<dbReference type="eggNOG" id="KOG3336">
    <property type="taxonomic scope" value="Eukaryota"/>
</dbReference>
<dbReference type="InParanoid" id="Q58DB0"/>
<dbReference type="OMA" id="YCPWNEK"/>
<dbReference type="OrthoDB" id="407630at2759"/>
<dbReference type="Proteomes" id="UP000009136">
    <property type="component" value="Chromosome 13"/>
</dbReference>
<dbReference type="Bgee" id="ENSBTAG00000004402">
    <property type="expression patterns" value="Expressed in rumen papilla and 106 other cell types or tissues"/>
</dbReference>
<dbReference type="GO" id="GO:0005758">
    <property type="term" value="C:mitochondrial intermembrane space"/>
    <property type="evidence" value="ECO:0000318"/>
    <property type="project" value="GO_Central"/>
</dbReference>
<dbReference type="GO" id="GO:1990050">
    <property type="term" value="F:phosphatidic acid transfer activity"/>
    <property type="evidence" value="ECO:0000318"/>
    <property type="project" value="GO_Central"/>
</dbReference>
<dbReference type="GO" id="GO:0015914">
    <property type="term" value="P:phospholipid transport"/>
    <property type="evidence" value="ECO:0000318"/>
    <property type="project" value="GO_Central"/>
</dbReference>
<dbReference type="InterPro" id="IPR006797">
    <property type="entry name" value="PRELI/MSF1_dom"/>
</dbReference>
<dbReference type="InterPro" id="IPR037365">
    <property type="entry name" value="Slowmo/Ups"/>
</dbReference>
<dbReference type="PANTHER" id="PTHR11158">
    <property type="entry name" value="MSF1/PX19 RELATED"/>
    <property type="match status" value="1"/>
</dbReference>
<dbReference type="Pfam" id="PF04707">
    <property type="entry name" value="PRELI"/>
    <property type="match status" value="1"/>
</dbReference>
<dbReference type="PROSITE" id="PS50904">
    <property type="entry name" value="PRELI_MSF1"/>
    <property type="match status" value="1"/>
</dbReference>
<gene>
    <name type="primary">PRELID3B</name>
    <name type="synonym">SLMO2</name>
</gene>
<proteinExistence type="evidence at transcript level"/>
<comment type="similarity">
    <text evidence="3">Belongs to the slowmo family.</text>
</comment>
<feature type="chain" id="PRO_0000247934" description="PRELI domain containing protein 3B">
    <location>
        <begin position="1"/>
        <end position="194"/>
    </location>
</feature>
<feature type="domain" description="PRELI/MSF1" evidence="2">
    <location>
        <begin position="1"/>
        <end position="172"/>
    </location>
</feature>
<feature type="modified residue" description="Phosphoserine" evidence="1">
    <location>
        <position position="46"/>
    </location>
</feature>
<feature type="modified residue" description="Phosphoserine" evidence="1">
    <location>
        <position position="51"/>
    </location>
</feature>
<reference key="1">
    <citation type="journal article" date="2005" name="BMC Genomics">
        <title>Characterization of 954 bovine full-CDS cDNA sequences.</title>
        <authorList>
            <person name="Harhay G.P."/>
            <person name="Sonstegard T.S."/>
            <person name="Keele J.W."/>
            <person name="Heaton M.P."/>
            <person name="Clawson M.L."/>
            <person name="Snelling W.M."/>
            <person name="Wiedmann R.T."/>
            <person name="Van Tassell C.P."/>
            <person name="Smith T.P.L."/>
        </authorList>
    </citation>
    <scope>NUCLEOTIDE SEQUENCE [LARGE SCALE MRNA]</scope>
</reference>
<reference key="2">
    <citation type="submission" date="2005-08" db="EMBL/GenBank/DDBJ databases">
        <authorList>
            <consortium name="NIH - Mammalian Gene Collection (MGC) project"/>
        </authorList>
    </citation>
    <scope>NUCLEOTIDE SEQUENCE [LARGE SCALE MRNA]</scope>
    <source>
        <strain>Crossbred X Angus</strain>
        <tissue>Ileum</tissue>
    </source>
</reference>
<protein>
    <recommendedName>
        <fullName>PRELI domain containing protein 3B</fullName>
    </recommendedName>
    <alternativeName>
        <fullName>Protein slowmo homolog 2</fullName>
    </alternativeName>
</protein>
<sequence length="194" mass="21520">MKIWTSEHVFDHPWETVTTAAMQKYPNPMNPSVVGVDVLDRHIDPSGKLHSHRLLSTEWGLPSIVKSIIGAARTKTYVQEHSVVDPVEKTMELKSTNISFTNMVSVDERLIYKPHPQDPEKTILTQEAIITVKGVSLGSYLEGLMASTISSNANKGREAMEWVIHKLNAEIEELTASARGSIRTPMAAAAFVEK</sequence>
<organism>
    <name type="scientific">Bos taurus</name>
    <name type="common">Bovine</name>
    <dbReference type="NCBI Taxonomy" id="9913"/>
    <lineage>
        <taxon>Eukaryota</taxon>
        <taxon>Metazoa</taxon>
        <taxon>Chordata</taxon>
        <taxon>Craniata</taxon>
        <taxon>Vertebrata</taxon>
        <taxon>Euteleostomi</taxon>
        <taxon>Mammalia</taxon>
        <taxon>Eutheria</taxon>
        <taxon>Laurasiatheria</taxon>
        <taxon>Artiodactyla</taxon>
        <taxon>Ruminantia</taxon>
        <taxon>Pecora</taxon>
        <taxon>Bovidae</taxon>
        <taxon>Bovinae</taxon>
        <taxon>Bos</taxon>
    </lineage>
</organism>